<keyword id="KW-0963">Cytoplasm</keyword>
<keyword id="KW-0312">Gluconeogenesis</keyword>
<keyword id="KW-0324">Glycolysis</keyword>
<keyword id="KW-0413">Isomerase</keyword>
<name>G6PI3_CLALE</name>
<comment type="catalytic activity">
    <reaction evidence="2">
        <text>alpha-D-glucose 6-phosphate = beta-D-fructose 6-phosphate</text>
        <dbReference type="Rhea" id="RHEA:11816"/>
        <dbReference type="ChEBI" id="CHEBI:57634"/>
        <dbReference type="ChEBI" id="CHEBI:58225"/>
        <dbReference type="EC" id="5.3.1.9"/>
    </reaction>
</comment>
<comment type="pathway">
    <text evidence="2">Carbohydrate degradation; glycolysis; D-glyceraldehyde 3-phosphate and glycerone phosphate from D-glucose: step 2/4.</text>
</comment>
<comment type="subunit">
    <text evidence="1">Homodimer.</text>
</comment>
<comment type="subcellular location">
    <subcellularLocation>
        <location>Cytoplasm</location>
    </subcellularLocation>
</comment>
<comment type="similarity">
    <text evidence="2">Belongs to the GPI family.</text>
</comment>
<feature type="chain" id="PRO_0000180563" description="Glucose-6-phosphate isomerase, cytosolic 2B">
    <location>
        <begin position="1" status="less than"/>
        <end position="317"/>
    </location>
</feature>
<feature type="active site" description="Proton donor" evidence="2">
    <location>
        <position position="108"/>
    </location>
</feature>
<feature type="active site" evidence="2">
    <location>
        <position position="139"/>
    </location>
</feature>
<feature type="active site" evidence="2">
    <location>
        <position position="264"/>
    </location>
</feature>
<feature type="non-terminal residue">
    <location>
        <position position="1"/>
    </location>
</feature>
<gene>
    <name type="primary">PGIC2-B</name>
</gene>
<accession>P34797</accession>
<evidence type="ECO:0000250" key="1"/>
<evidence type="ECO:0000255" key="2">
    <source>
        <dbReference type="PROSITE-ProRule" id="PRU00796"/>
    </source>
</evidence>
<reference key="1">
    <citation type="journal article" date="1993" name="Genetics">
        <title>Molecular characterization of duplicate cytosolic phosphoglucose isomerase genes in Clarkia and comparison to the single gene in Arabidopsis.</title>
        <authorList>
            <person name="Thomas B.R."/>
            <person name="Ford V.S."/>
            <person name="Pichersky E."/>
            <person name="Gottlieb L.D."/>
        </authorList>
    </citation>
    <scope>NUCLEOTIDE SEQUENCE [GENOMIC DNA]</scope>
</reference>
<proteinExistence type="inferred from homology"/>
<organism>
    <name type="scientific">Clarkia lewisii</name>
    <name type="common">Farewell-to-spring</name>
    <name type="synonym">Clarkia bottae</name>
    <dbReference type="NCBI Taxonomy" id="3936"/>
    <lineage>
        <taxon>Eukaryota</taxon>
        <taxon>Viridiplantae</taxon>
        <taxon>Streptophyta</taxon>
        <taxon>Embryophyta</taxon>
        <taxon>Tracheophyta</taxon>
        <taxon>Spermatophyta</taxon>
        <taxon>Magnoliopsida</taxon>
        <taxon>eudicotyledons</taxon>
        <taxon>Gunneridae</taxon>
        <taxon>Pentapetalae</taxon>
        <taxon>rosids</taxon>
        <taxon>malvids</taxon>
        <taxon>Myrtales</taxon>
        <taxon>Onagraceae</taxon>
        <taxon>Onagroideae</taxon>
        <taxon>Onagreae</taxon>
        <taxon>Clarkia</taxon>
    </lineage>
</organism>
<sequence>LVEKFGIDPNNAFAFWDWVGGRYSVCSAVGVLPLSLQYGFSVVEKFLQGAHSIDQHFSSAPFEKNIPVLLGLLSVWNVSFLGYPARAILPYSQALEKLAPHIQQVSMESNGKGVSIDGLPLPFESGEIDFGEPGTNGQHSFYQLIHQGRVIPCDFIGVVKSQQPVYLKGEVVNNHDELMSNFFAQPDALAYGKTPAQLKKENVSEHLIPHKTFTGNRPSLSILLPTLDAYRIGQLLAIYEHRVAVQGFVWGINSFDQWGVELGKSLATQVRKQLHASRVKGEPVEEGFNFSTKTLLTRYLQATTDVPADPSTLLPNI</sequence>
<protein>
    <recommendedName>
        <fullName>Glucose-6-phosphate isomerase, cytosolic 2B</fullName>
        <shortName>GPI</shortName>
        <ecNumber>5.3.1.9</ecNumber>
    </recommendedName>
    <alternativeName>
        <fullName>PGI3</fullName>
        <shortName>PGI</shortName>
    </alternativeName>
    <alternativeName>
        <fullName>Phosphoglucose isomerase</fullName>
    </alternativeName>
    <alternativeName>
        <fullName>Phosphohexose isomerase</fullName>
        <shortName>PHI</shortName>
    </alternativeName>
</protein>
<dbReference type="EC" id="5.3.1.9"/>
<dbReference type="EMBL" id="X71085">
    <property type="protein sequence ID" value="CAA50403.1"/>
    <property type="molecule type" value="Genomic_DNA"/>
</dbReference>
<dbReference type="PIR" id="S41807">
    <property type="entry name" value="S41807"/>
</dbReference>
<dbReference type="SMR" id="P34797"/>
<dbReference type="UniPathway" id="UPA00109">
    <property type="reaction ID" value="UER00181"/>
</dbReference>
<dbReference type="GO" id="GO:0005829">
    <property type="term" value="C:cytosol"/>
    <property type="evidence" value="ECO:0007669"/>
    <property type="project" value="TreeGrafter"/>
</dbReference>
<dbReference type="GO" id="GO:0097367">
    <property type="term" value="F:carbohydrate derivative binding"/>
    <property type="evidence" value="ECO:0007669"/>
    <property type="project" value="InterPro"/>
</dbReference>
<dbReference type="GO" id="GO:0004347">
    <property type="term" value="F:glucose-6-phosphate isomerase activity"/>
    <property type="evidence" value="ECO:0007669"/>
    <property type="project" value="UniProtKB-EC"/>
</dbReference>
<dbReference type="GO" id="GO:0048029">
    <property type="term" value="F:monosaccharide binding"/>
    <property type="evidence" value="ECO:0007669"/>
    <property type="project" value="TreeGrafter"/>
</dbReference>
<dbReference type="GO" id="GO:0006094">
    <property type="term" value="P:gluconeogenesis"/>
    <property type="evidence" value="ECO:0007669"/>
    <property type="project" value="UniProtKB-KW"/>
</dbReference>
<dbReference type="GO" id="GO:0051156">
    <property type="term" value="P:glucose 6-phosphate metabolic process"/>
    <property type="evidence" value="ECO:0007669"/>
    <property type="project" value="TreeGrafter"/>
</dbReference>
<dbReference type="GO" id="GO:0006096">
    <property type="term" value="P:glycolytic process"/>
    <property type="evidence" value="ECO:0007669"/>
    <property type="project" value="UniProtKB-UniPathway"/>
</dbReference>
<dbReference type="CDD" id="cd05016">
    <property type="entry name" value="SIS_PGI_2"/>
    <property type="match status" value="1"/>
</dbReference>
<dbReference type="FunFam" id="1.10.1390.10:FF:000002">
    <property type="entry name" value="Glucose-6-phosphate isomerase"/>
    <property type="match status" value="1"/>
</dbReference>
<dbReference type="FunFam" id="3.40.50.10490:FF:000031">
    <property type="entry name" value="Glucose-6-phosphate isomerase"/>
    <property type="match status" value="1"/>
</dbReference>
<dbReference type="Gene3D" id="1.10.1390.10">
    <property type="match status" value="1"/>
</dbReference>
<dbReference type="Gene3D" id="3.40.50.10490">
    <property type="entry name" value="Glucose-6-phosphate isomerase like protein, domain 1"/>
    <property type="match status" value="2"/>
</dbReference>
<dbReference type="InterPro" id="IPR001672">
    <property type="entry name" value="G6P_Isomerase"/>
</dbReference>
<dbReference type="InterPro" id="IPR023096">
    <property type="entry name" value="G6P_Isomerase_C"/>
</dbReference>
<dbReference type="InterPro" id="IPR018189">
    <property type="entry name" value="Phosphoglucose_isomerase_CS"/>
</dbReference>
<dbReference type="InterPro" id="IPR046348">
    <property type="entry name" value="SIS_dom_sf"/>
</dbReference>
<dbReference type="InterPro" id="IPR035482">
    <property type="entry name" value="SIS_PGI_2"/>
</dbReference>
<dbReference type="PANTHER" id="PTHR11469">
    <property type="entry name" value="GLUCOSE-6-PHOSPHATE ISOMERASE"/>
    <property type="match status" value="1"/>
</dbReference>
<dbReference type="PANTHER" id="PTHR11469:SF1">
    <property type="entry name" value="GLUCOSE-6-PHOSPHATE ISOMERASE"/>
    <property type="match status" value="1"/>
</dbReference>
<dbReference type="Pfam" id="PF00342">
    <property type="entry name" value="PGI"/>
    <property type="match status" value="1"/>
</dbReference>
<dbReference type="PRINTS" id="PR00662">
    <property type="entry name" value="G6PISOMERASE"/>
</dbReference>
<dbReference type="SUPFAM" id="SSF53697">
    <property type="entry name" value="SIS domain"/>
    <property type="match status" value="1"/>
</dbReference>
<dbReference type="PROSITE" id="PS00765">
    <property type="entry name" value="P_GLUCOSE_ISOMERASE_1"/>
    <property type="match status" value="1"/>
</dbReference>
<dbReference type="PROSITE" id="PS00174">
    <property type="entry name" value="P_GLUCOSE_ISOMERASE_2"/>
    <property type="match status" value="1"/>
</dbReference>
<dbReference type="PROSITE" id="PS51463">
    <property type="entry name" value="P_GLUCOSE_ISOMERASE_3"/>
    <property type="match status" value="1"/>
</dbReference>